<gene>
    <name evidence="2" type="primary">ghoS</name>
    <name type="ordered locus">Z5730</name>
    <name type="ordered locus">ECs5110</name>
</gene>
<dbReference type="EC" id="3.1.-.-"/>
<dbReference type="EMBL" id="AE005174">
    <property type="protein sequence ID" value="AAG59327.1"/>
    <property type="molecule type" value="Genomic_DNA"/>
</dbReference>
<dbReference type="EMBL" id="BA000007">
    <property type="protein sequence ID" value="BAB38533.1"/>
    <property type="molecule type" value="Genomic_DNA"/>
</dbReference>
<dbReference type="PIR" id="C86108">
    <property type="entry name" value="C86108"/>
</dbReference>
<dbReference type="PIR" id="F91267">
    <property type="entry name" value="F91267"/>
</dbReference>
<dbReference type="RefSeq" id="NP_313137.1">
    <property type="nucleotide sequence ID" value="NC_002695.1"/>
</dbReference>
<dbReference type="RefSeq" id="WP_000398619.1">
    <property type="nucleotide sequence ID" value="NZ_VOAI01000008.1"/>
</dbReference>
<dbReference type="BMRB" id="P0AF62"/>
<dbReference type="SMR" id="P0AF62"/>
<dbReference type="STRING" id="155864.Z5730"/>
<dbReference type="GeneID" id="914192"/>
<dbReference type="GeneID" id="93777704"/>
<dbReference type="KEGG" id="ece:Z5730"/>
<dbReference type="KEGG" id="ecs:ECs_5110"/>
<dbReference type="PATRIC" id="fig|386585.9.peg.5340"/>
<dbReference type="HOGENOM" id="CLU_182150_0_0_6"/>
<dbReference type="OMA" id="DYFRQIY"/>
<dbReference type="Proteomes" id="UP000000558">
    <property type="component" value="Chromosome"/>
</dbReference>
<dbReference type="Proteomes" id="UP000002519">
    <property type="component" value="Chromosome"/>
</dbReference>
<dbReference type="GO" id="GO:0004521">
    <property type="term" value="F:RNA endonuclease activity"/>
    <property type="evidence" value="ECO:0007669"/>
    <property type="project" value="InterPro"/>
</dbReference>
<dbReference type="FunFam" id="3.30.70.2360:FF:000002">
    <property type="entry name" value="Endoribonuclease antitoxin GhoS"/>
    <property type="match status" value="1"/>
</dbReference>
<dbReference type="Gene3D" id="3.30.70.2360">
    <property type="match status" value="1"/>
</dbReference>
<dbReference type="InterPro" id="IPR022597">
    <property type="entry name" value="GhoS"/>
</dbReference>
<dbReference type="InterPro" id="IPR038241">
    <property type="entry name" value="GhoS_sf"/>
</dbReference>
<dbReference type="Pfam" id="PF11080">
    <property type="entry name" value="GhoS"/>
    <property type="match status" value="1"/>
</dbReference>
<reference key="1">
    <citation type="journal article" date="2001" name="Nature">
        <title>Genome sequence of enterohaemorrhagic Escherichia coli O157:H7.</title>
        <authorList>
            <person name="Perna N.T."/>
            <person name="Plunkett G. III"/>
            <person name="Burland V."/>
            <person name="Mau B."/>
            <person name="Glasner J.D."/>
            <person name="Rose D.J."/>
            <person name="Mayhew G.F."/>
            <person name="Evans P.S."/>
            <person name="Gregor J."/>
            <person name="Kirkpatrick H.A."/>
            <person name="Posfai G."/>
            <person name="Hackett J."/>
            <person name="Klink S."/>
            <person name="Boutin A."/>
            <person name="Shao Y."/>
            <person name="Miller L."/>
            <person name="Grotbeck E.J."/>
            <person name="Davis N.W."/>
            <person name="Lim A."/>
            <person name="Dimalanta E.T."/>
            <person name="Potamousis K."/>
            <person name="Apodaca J."/>
            <person name="Anantharaman T.S."/>
            <person name="Lin J."/>
            <person name="Yen G."/>
            <person name="Schwartz D.C."/>
            <person name="Welch R.A."/>
            <person name="Blattner F.R."/>
        </authorList>
    </citation>
    <scope>NUCLEOTIDE SEQUENCE [LARGE SCALE GENOMIC DNA]</scope>
    <source>
        <strain>O157:H7 / EDL933 / ATCC 700927 / EHEC</strain>
    </source>
</reference>
<reference key="2">
    <citation type="journal article" date="2001" name="DNA Res.">
        <title>Complete genome sequence of enterohemorrhagic Escherichia coli O157:H7 and genomic comparison with a laboratory strain K-12.</title>
        <authorList>
            <person name="Hayashi T."/>
            <person name="Makino K."/>
            <person name="Ohnishi M."/>
            <person name="Kurokawa K."/>
            <person name="Ishii K."/>
            <person name="Yokoyama K."/>
            <person name="Han C.-G."/>
            <person name="Ohtsubo E."/>
            <person name="Nakayama K."/>
            <person name="Murata T."/>
            <person name="Tanaka M."/>
            <person name="Tobe T."/>
            <person name="Iida T."/>
            <person name="Takami H."/>
            <person name="Honda T."/>
            <person name="Sasakawa C."/>
            <person name="Ogasawara N."/>
            <person name="Yasunaga T."/>
            <person name="Kuhara S."/>
            <person name="Shiba T."/>
            <person name="Hattori M."/>
            <person name="Shinagawa H."/>
        </authorList>
    </citation>
    <scope>NUCLEOTIDE SEQUENCE [LARGE SCALE GENOMIC DNA]</scope>
    <source>
        <strain>O157:H7 / Sakai / RIMD 0509952 / EHEC</strain>
    </source>
</reference>
<evidence type="ECO:0000250" key="1">
    <source>
        <dbReference type="UniProtKB" id="P0AF61"/>
    </source>
</evidence>
<evidence type="ECO:0000305" key="2"/>
<sequence length="98" mass="11468">MEGKNKFNTYVVSFDYPSSYSSVFLRLRSLMYDMNFSSIVADEYGIPRQLNENSFAITTSLAASEIEDLIRLKCLDLPDIDFDLNIMTVDDYFRQFYK</sequence>
<protein>
    <recommendedName>
        <fullName evidence="2">Endoribonuclease antitoxin GhoS</fullName>
        <ecNumber>3.1.-.-</ecNumber>
    </recommendedName>
    <alternativeName>
        <fullName>Antitoxin GhoS</fullName>
    </alternativeName>
</protein>
<proteinExistence type="inferred from homology"/>
<comment type="function">
    <text evidence="1">Antitoxin component of a type V toxin-antitoxin (TA) system. Neutralizes the toxic effects of toxin GhoT by digesting ghoT transcripts in a sequence-specific manner. In concert with GhoT is involved in reducing cell growth during antibacterial stress.</text>
</comment>
<comment type="subunit">
    <text evidence="1">Monomer.</text>
</comment>
<comment type="PTM">
    <text evidence="1">Unlike other TA antitoxins, this protein is stable.</text>
</comment>
<keyword id="KW-0255">Endonuclease</keyword>
<keyword id="KW-0378">Hydrolase</keyword>
<keyword id="KW-0540">Nuclease</keyword>
<keyword id="KW-1185">Reference proteome</keyword>
<keyword id="KW-1277">Toxin-antitoxin system</keyword>
<keyword id="KW-0804">Transcription</keyword>
<keyword id="KW-0805">Transcription regulation</keyword>
<name>GHOS_ECO57</name>
<organism>
    <name type="scientific">Escherichia coli O157:H7</name>
    <dbReference type="NCBI Taxonomy" id="83334"/>
    <lineage>
        <taxon>Bacteria</taxon>
        <taxon>Pseudomonadati</taxon>
        <taxon>Pseudomonadota</taxon>
        <taxon>Gammaproteobacteria</taxon>
        <taxon>Enterobacterales</taxon>
        <taxon>Enterobacteriaceae</taxon>
        <taxon>Escherichia</taxon>
    </lineage>
</organism>
<feature type="chain" id="PRO_0000169734" description="Endoribonuclease antitoxin GhoS">
    <location>
        <begin position="1"/>
        <end position="98"/>
    </location>
</feature>
<accession>P0AF62</accession>
<accession>P39275</accession>